<gene>
    <name type="ordered locus">XC_1366</name>
</gene>
<proteinExistence type="inferred from homology"/>
<reference key="1">
    <citation type="journal article" date="2005" name="Genome Res.">
        <title>Comparative and functional genomic analyses of the pathogenicity of phytopathogen Xanthomonas campestris pv. campestris.</title>
        <authorList>
            <person name="Qian W."/>
            <person name="Jia Y."/>
            <person name="Ren S.-X."/>
            <person name="He Y.-Q."/>
            <person name="Feng J.-X."/>
            <person name="Lu L.-F."/>
            <person name="Sun Q."/>
            <person name="Ying G."/>
            <person name="Tang D.-J."/>
            <person name="Tang H."/>
            <person name="Wu W."/>
            <person name="Hao P."/>
            <person name="Wang L."/>
            <person name="Jiang B.-L."/>
            <person name="Zeng S."/>
            <person name="Gu W.-Y."/>
            <person name="Lu G."/>
            <person name="Rong L."/>
            <person name="Tian Y."/>
            <person name="Yao Z."/>
            <person name="Fu G."/>
            <person name="Chen B."/>
            <person name="Fang R."/>
            <person name="Qiang B."/>
            <person name="Chen Z."/>
            <person name="Zhao G.-P."/>
            <person name="Tang J.-L."/>
            <person name="He C."/>
        </authorList>
    </citation>
    <scope>NUCLEOTIDE SEQUENCE [LARGE SCALE GENOMIC DNA]</scope>
    <source>
        <strain>8004</strain>
    </source>
</reference>
<keyword id="KW-0963">Cytoplasm</keyword>
<keyword id="KW-0378">Hydrolase</keyword>
<keyword id="KW-0540">Nuclease</keyword>
<keyword id="KW-0690">Ribosome biogenesis</keyword>
<accession>Q4UWY8</accession>
<name>YQGF_XANC8</name>
<feature type="chain" id="PRO_0000257616" description="Putative pre-16S rRNA nuclease">
    <location>
        <begin position="1"/>
        <end position="155"/>
    </location>
</feature>
<comment type="function">
    <text evidence="1">Could be a nuclease involved in processing of the 5'-end of pre-16S rRNA.</text>
</comment>
<comment type="subcellular location">
    <subcellularLocation>
        <location evidence="1">Cytoplasm</location>
    </subcellularLocation>
</comment>
<comment type="similarity">
    <text evidence="1">Belongs to the YqgF nuclease family.</text>
</comment>
<evidence type="ECO:0000255" key="1">
    <source>
        <dbReference type="HAMAP-Rule" id="MF_00651"/>
    </source>
</evidence>
<sequence>MPEAGAIRPDATVLGFDVGSRRIGVAVGTALGAGARAVAVINVHANGPDWVALDRVHKEWRPAGLVVGDPLTLDDKDQPARKRAHAFARELRERYALPVVLIDERSSSVEAAQRFARERADGRKRRRDADTLDAMAAAVIVERWLSAPEQATLLP</sequence>
<protein>
    <recommendedName>
        <fullName evidence="1">Putative pre-16S rRNA nuclease</fullName>
        <ecNumber evidence="1">3.1.-.-</ecNumber>
    </recommendedName>
</protein>
<dbReference type="EC" id="3.1.-.-" evidence="1"/>
<dbReference type="EMBL" id="CP000050">
    <property type="protein sequence ID" value="AAY48435.1"/>
    <property type="molecule type" value="Genomic_DNA"/>
</dbReference>
<dbReference type="SMR" id="Q4UWY8"/>
<dbReference type="KEGG" id="xcb:XC_1366"/>
<dbReference type="HOGENOM" id="CLU_098240_3_2_6"/>
<dbReference type="Proteomes" id="UP000000420">
    <property type="component" value="Chromosome"/>
</dbReference>
<dbReference type="GO" id="GO:0005829">
    <property type="term" value="C:cytosol"/>
    <property type="evidence" value="ECO:0007669"/>
    <property type="project" value="TreeGrafter"/>
</dbReference>
<dbReference type="GO" id="GO:0004518">
    <property type="term" value="F:nuclease activity"/>
    <property type="evidence" value="ECO:0007669"/>
    <property type="project" value="UniProtKB-KW"/>
</dbReference>
<dbReference type="GO" id="GO:0000967">
    <property type="term" value="P:rRNA 5'-end processing"/>
    <property type="evidence" value="ECO:0007669"/>
    <property type="project" value="UniProtKB-UniRule"/>
</dbReference>
<dbReference type="CDD" id="cd16964">
    <property type="entry name" value="YqgF"/>
    <property type="match status" value="1"/>
</dbReference>
<dbReference type="Gene3D" id="3.30.420.140">
    <property type="entry name" value="YqgF/RNase H-like domain"/>
    <property type="match status" value="1"/>
</dbReference>
<dbReference type="HAMAP" id="MF_00651">
    <property type="entry name" value="Nuclease_YqgF"/>
    <property type="match status" value="1"/>
</dbReference>
<dbReference type="InterPro" id="IPR012337">
    <property type="entry name" value="RNaseH-like_sf"/>
</dbReference>
<dbReference type="InterPro" id="IPR005227">
    <property type="entry name" value="YqgF"/>
</dbReference>
<dbReference type="InterPro" id="IPR006641">
    <property type="entry name" value="YqgF/RNaseH-like_dom"/>
</dbReference>
<dbReference type="InterPro" id="IPR037027">
    <property type="entry name" value="YqgF/RNaseH-like_dom_sf"/>
</dbReference>
<dbReference type="NCBIfam" id="TIGR00250">
    <property type="entry name" value="RNAse_H_YqgF"/>
    <property type="match status" value="1"/>
</dbReference>
<dbReference type="PANTHER" id="PTHR33317">
    <property type="entry name" value="POLYNUCLEOTIDYL TRANSFERASE, RIBONUCLEASE H-LIKE SUPERFAMILY PROTEIN"/>
    <property type="match status" value="1"/>
</dbReference>
<dbReference type="PANTHER" id="PTHR33317:SF4">
    <property type="entry name" value="POLYNUCLEOTIDYL TRANSFERASE, RIBONUCLEASE H-LIKE SUPERFAMILY PROTEIN"/>
    <property type="match status" value="1"/>
</dbReference>
<dbReference type="Pfam" id="PF03652">
    <property type="entry name" value="RuvX"/>
    <property type="match status" value="1"/>
</dbReference>
<dbReference type="SMART" id="SM00732">
    <property type="entry name" value="YqgFc"/>
    <property type="match status" value="1"/>
</dbReference>
<dbReference type="SUPFAM" id="SSF53098">
    <property type="entry name" value="Ribonuclease H-like"/>
    <property type="match status" value="1"/>
</dbReference>
<organism>
    <name type="scientific">Xanthomonas campestris pv. campestris (strain 8004)</name>
    <dbReference type="NCBI Taxonomy" id="314565"/>
    <lineage>
        <taxon>Bacteria</taxon>
        <taxon>Pseudomonadati</taxon>
        <taxon>Pseudomonadota</taxon>
        <taxon>Gammaproteobacteria</taxon>
        <taxon>Lysobacterales</taxon>
        <taxon>Lysobacteraceae</taxon>
        <taxon>Xanthomonas</taxon>
    </lineage>
</organism>